<proteinExistence type="inferred from homology"/>
<protein>
    <recommendedName>
        <fullName evidence="6 7">Cardiotoxin 7a</fullName>
    </recommendedName>
</protein>
<keyword id="KW-1015">Disulfide bond</keyword>
<keyword id="KW-0472">Membrane</keyword>
<keyword id="KW-0964">Secreted</keyword>
<keyword id="KW-0732">Signal</keyword>
<keyword id="KW-1052">Target cell membrane</keyword>
<keyword id="KW-1053">Target membrane</keyword>
<keyword id="KW-0800">Toxin</keyword>
<feature type="signal peptide" evidence="1">
    <location>
        <begin position="1"/>
        <end position="21"/>
    </location>
</feature>
<feature type="chain" id="PRO_0000035383" description="Cardiotoxin 7a">
    <location>
        <begin position="22"/>
        <end position="83"/>
    </location>
</feature>
<feature type="disulfide bond" evidence="3">
    <location>
        <begin position="24"/>
        <end position="43"/>
    </location>
</feature>
<feature type="disulfide bond" evidence="3">
    <location>
        <begin position="36"/>
        <end position="61"/>
    </location>
</feature>
<feature type="disulfide bond" evidence="3">
    <location>
        <begin position="65"/>
        <end position="76"/>
    </location>
</feature>
<feature type="disulfide bond" evidence="3">
    <location>
        <begin position="77"/>
        <end position="82"/>
    </location>
</feature>
<name>3SOFA_NAJAT</name>
<dbReference type="EMBL" id="U58518">
    <property type="protein sequence ID" value="AAB03220.1"/>
    <property type="molecule type" value="mRNA"/>
</dbReference>
<dbReference type="EMBL" id="U77489">
    <property type="protein sequence ID" value="AAB36929.1"/>
    <property type="molecule type" value="mRNA"/>
</dbReference>
<dbReference type="BMRB" id="Q91126"/>
<dbReference type="SMR" id="Q91126"/>
<dbReference type="GO" id="GO:0005576">
    <property type="term" value="C:extracellular region"/>
    <property type="evidence" value="ECO:0007669"/>
    <property type="project" value="UniProtKB-SubCell"/>
</dbReference>
<dbReference type="GO" id="GO:0016020">
    <property type="term" value="C:membrane"/>
    <property type="evidence" value="ECO:0007669"/>
    <property type="project" value="UniProtKB-KW"/>
</dbReference>
<dbReference type="GO" id="GO:0044218">
    <property type="term" value="C:other organism cell membrane"/>
    <property type="evidence" value="ECO:0007669"/>
    <property type="project" value="UniProtKB-KW"/>
</dbReference>
<dbReference type="GO" id="GO:0090729">
    <property type="term" value="F:toxin activity"/>
    <property type="evidence" value="ECO:0007669"/>
    <property type="project" value="UniProtKB-KW"/>
</dbReference>
<dbReference type="CDD" id="cd00206">
    <property type="entry name" value="TFP_snake_toxin"/>
    <property type="match status" value="1"/>
</dbReference>
<dbReference type="FunFam" id="2.10.60.10:FF:000024">
    <property type="entry name" value="Cytotoxin 1"/>
    <property type="match status" value="1"/>
</dbReference>
<dbReference type="Gene3D" id="2.10.60.10">
    <property type="entry name" value="CD59"/>
    <property type="match status" value="1"/>
</dbReference>
<dbReference type="InterPro" id="IPR003572">
    <property type="entry name" value="Cytotoxin_Cobra"/>
</dbReference>
<dbReference type="InterPro" id="IPR003571">
    <property type="entry name" value="Snake_3FTx"/>
</dbReference>
<dbReference type="InterPro" id="IPR045860">
    <property type="entry name" value="Snake_toxin-like_sf"/>
</dbReference>
<dbReference type="InterPro" id="IPR018354">
    <property type="entry name" value="Snake_toxin_con_site"/>
</dbReference>
<dbReference type="InterPro" id="IPR054131">
    <property type="entry name" value="Toxin_cobra-type"/>
</dbReference>
<dbReference type="Pfam" id="PF21947">
    <property type="entry name" value="Toxin_cobra-type"/>
    <property type="match status" value="1"/>
</dbReference>
<dbReference type="PRINTS" id="PR00282">
    <property type="entry name" value="CYTOTOXIN"/>
</dbReference>
<dbReference type="SUPFAM" id="SSF57302">
    <property type="entry name" value="Snake toxin-like"/>
    <property type="match status" value="1"/>
</dbReference>
<dbReference type="PROSITE" id="PS00272">
    <property type="entry name" value="SNAKE_TOXIN"/>
    <property type="match status" value="1"/>
</dbReference>
<reference key="1">
    <citation type="submission" date="1996-11" db="EMBL/GenBank/DDBJ databases">
        <authorList>
            <person name="Chu R.C."/>
            <person name="Yang C.-C."/>
        </authorList>
    </citation>
    <scope>NUCLEOTIDE SEQUENCE [MRNA]</scope>
    <source>
        <tissue>Venom gland</tissue>
    </source>
</reference>
<accession>Q91126</accession>
<accession>O13173</accession>
<accession>O13230</accession>
<organism>
    <name type="scientific">Naja atra</name>
    <name type="common">Chinese cobra</name>
    <dbReference type="NCBI Taxonomy" id="8656"/>
    <lineage>
        <taxon>Eukaryota</taxon>
        <taxon>Metazoa</taxon>
        <taxon>Chordata</taxon>
        <taxon>Craniata</taxon>
        <taxon>Vertebrata</taxon>
        <taxon>Euteleostomi</taxon>
        <taxon>Lepidosauria</taxon>
        <taxon>Squamata</taxon>
        <taxon>Bifurcata</taxon>
        <taxon>Unidentata</taxon>
        <taxon>Episquamata</taxon>
        <taxon>Toxicofera</taxon>
        <taxon>Serpentes</taxon>
        <taxon>Colubroidea</taxon>
        <taxon>Elapidae</taxon>
        <taxon>Elapinae</taxon>
        <taxon>Naja</taxon>
    </lineage>
</organism>
<sequence length="83" mass="9319">MKTLLLTLVVVTIVCLDLGYTLKCHNTQLPFIYKTCPEGKNLCFKATLKKFPLKFPVKRGCADNCPKNSALLKYVCCSTEKCN</sequence>
<evidence type="ECO:0000250" key="1"/>
<evidence type="ECO:0000250" key="2">
    <source>
        <dbReference type="UniProtKB" id="P14541"/>
    </source>
</evidence>
<evidence type="ECO:0000250" key="3">
    <source>
        <dbReference type="UniProtKB" id="P60301"/>
    </source>
</evidence>
<evidence type="ECO:0000250" key="4">
    <source>
        <dbReference type="UniProtKB" id="P62375"/>
    </source>
</evidence>
<evidence type="ECO:0000305" key="5"/>
<evidence type="ECO:0000312" key="6">
    <source>
        <dbReference type="EMBL" id="AAB03220.1"/>
    </source>
</evidence>
<evidence type="ECO:0000312" key="7">
    <source>
        <dbReference type="EMBL" id="AAB36929.1"/>
    </source>
</evidence>
<comment type="function">
    <text evidence="2">Has low cytotoxic activity.</text>
</comment>
<comment type="subcellular location">
    <subcellularLocation>
        <location evidence="4">Secreted</location>
    </subcellularLocation>
    <subcellularLocation>
        <location evidence="4">Target cell membrane</location>
    </subcellularLocation>
</comment>
<comment type="tissue specificity">
    <text evidence="5">Expressed by the venom gland.</text>
</comment>
<comment type="miscellaneous">
    <text evidence="5">Is classified as a P-type cytotoxin, since a proline residue stands at position 52 (Pro-31 in standard classification).</text>
</comment>
<comment type="similarity">
    <text evidence="5">Belongs to the three-finger toxin family. Short-chain subfamily. Orphan group XV sub-subfamily.</text>
</comment>